<proteinExistence type="inferred from homology"/>
<dbReference type="EC" id="1.3.3.3" evidence="1"/>
<dbReference type="EMBL" id="CP000849">
    <property type="protein sequence ID" value="ABV79831.1"/>
    <property type="molecule type" value="Genomic_DNA"/>
</dbReference>
<dbReference type="RefSeq" id="WP_012152286.1">
    <property type="nucleotide sequence ID" value="NC_009883.1"/>
</dbReference>
<dbReference type="SMR" id="A8GY81"/>
<dbReference type="KEGG" id="rbo:A1I_07665"/>
<dbReference type="HOGENOM" id="CLU_026169_0_1_5"/>
<dbReference type="UniPathway" id="UPA00251">
    <property type="reaction ID" value="UER00322"/>
</dbReference>
<dbReference type="GO" id="GO:0005737">
    <property type="term" value="C:cytoplasm"/>
    <property type="evidence" value="ECO:0007669"/>
    <property type="project" value="UniProtKB-SubCell"/>
</dbReference>
<dbReference type="GO" id="GO:0004109">
    <property type="term" value="F:coproporphyrinogen oxidase activity"/>
    <property type="evidence" value="ECO:0007669"/>
    <property type="project" value="UniProtKB-UniRule"/>
</dbReference>
<dbReference type="GO" id="GO:0046872">
    <property type="term" value="F:metal ion binding"/>
    <property type="evidence" value="ECO:0007669"/>
    <property type="project" value="UniProtKB-KW"/>
</dbReference>
<dbReference type="GO" id="GO:0042803">
    <property type="term" value="F:protein homodimerization activity"/>
    <property type="evidence" value="ECO:0000250"/>
    <property type="project" value="UniProtKB"/>
</dbReference>
<dbReference type="GO" id="GO:0006782">
    <property type="term" value="P:protoporphyrinogen IX biosynthetic process"/>
    <property type="evidence" value="ECO:0007669"/>
    <property type="project" value="UniProtKB-UniRule"/>
</dbReference>
<dbReference type="FunFam" id="3.40.1500.10:FF:000005">
    <property type="entry name" value="Oxygen-dependent coproporphyrinogen-III oxidase"/>
    <property type="match status" value="1"/>
</dbReference>
<dbReference type="Gene3D" id="3.40.1500.10">
    <property type="entry name" value="Coproporphyrinogen III oxidase, aerobic"/>
    <property type="match status" value="1"/>
</dbReference>
<dbReference type="HAMAP" id="MF_00333">
    <property type="entry name" value="Coprogen_oxidas"/>
    <property type="match status" value="1"/>
</dbReference>
<dbReference type="InterPro" id="IPR001260">
    <property type="entry name" value="Coprogen_oxidase_aer"/>
</dbReference>
<dbReference type="InterPro" id="IPR036406">
    <property type="entry name" value="Coprogen_oxidase_aer_sf"/>
</dbReference>
<dbReference type="InterPro" id="IPR018375">
    <property type="entry name" value="Coprogen_oxidase_CS"/>
</dbReference>
<dbReference type="NCBIfam" id="NF003727">
    <property type="entry name" value="PRK05330.1"/>
    <property type="match status" value="1"/>
</dbReference>
<dbReference type="PANTHER" id="PTHR10755">
    <property type="entry name" value="COPROPORPHYRINOGEN III OXIDASE, MITOCHONDRIAL"/>
    <property type="match status" value="1"/>
</dbReference>
<dbReference type="PANTHER" id="PTHR10755:SF0">
    <property type="entry name" value="OXYGEN-DEPENDENT COPROPORPHYRINOGEN-III OXIDASE, MITOCHONDRIAL"/>
    <property type="match status" value="1"/>
</dbReference>
<dbReference type="Pfam" id="PF01218">
    <property type="entry name" value="Coprogen_oxidas"/>
    <property type="match status" value="1"/>
</dbReference>
<dbReference type="PIRSF" id="PIRSF000166">
    <property type="entry name" value="Coproporphyri_ox"/>
    <property type="match status" value="1"/>
</dbReference>
<dbReference type="PRINTS" id="PR00073">
    <property type="entry name" value="COPRGNOXDASE"/>
</dbReference>
<dbReference type="SUPFAM" id="SSF102886">
    <property type="entry name" value="Coproporphyrinogen III oxidase"/>
    <property type="match status" value="1"/>
</dbReference>
<dbReference type="PROSITE" id="PS01021">
    <property type="entry name" value="COPROGEN_OXIDASE"/>
    <property type="match status" value="1"/>
</dbReference>
<gene>
    <name evidence="1" type="primary">hemF</name>
    <name type="ordered locus">A1I_07665</name>
</gene>
<reference key="1">
    <citation type="submission" date="2007-09" db="EMBL/GenBank/DDBJ databases">
        <title>Complete genome sequencing of Rickettsia bellii.</title>
        <authorList>
            <person name="Madan A."/>
            <person name="Lee H."/>
            <person name="Madan A."/>
            <person name="Yoon J.-G."/>
            <person name="Ryu G.-Y."/>
            <person name="Dasch G."/>
            <person name="Ereemeva M."/>
        </authorList>
    </citation>
    <scope>NUCLEOTIDE SEQUENCE [LARGE SCALE GENOMIC DNA]</scope>
    <source>
        <strain>OSU 85-389</strain>
    </source>
</reference>
<protein>
    <recommendedName>
        <fullName evidence="1">Oxygen-dependent coproporphyrinogen-III oxidase</fullName>
        <shortName evidence="1">CPO</shortName>
        <shortName evidence="1">Coprogen oxidase</shortName>
        <shortName evidence="1">Coproporphyrinogenase</shortName>
        <ecNumber evidence="1">1.3.3.3</ecNumber>
    </recommendedName>
</protein>
<sequence length="279" mass="31933">MNKKNREVTSSWFTNLRDLVCAEFEKIEEEYAKAKGLKPGKFVRSSWERDGGGGGVMSVMKGEVFEKVGVNISTVFGEFSKAFRAEIPGAELDGKFFATGISLVAHLKSPLIPAMHFNTRYIETSKNWFGGGGDLTPFYPEEDETAKFHAAFKEACDKYDSGYYPKFKKQCDEYFYLKHRKEPRGVGGIFYDYLNSGNFEQDFSFTQDVGKALLSVYPEIVRNKLFLPWTDEQKEYQLIRRGRYVEFNLLYDRGTKFGLMTDGNVEAILMSLPPEVKWA</sequence>
<comment type="function">
    <text evidence="1">Involved in the heme biosynthesis. Catalyzes the aerobic oxidative decarboxylation of propionate groups of rings A and B of coproporphyrinogen-III to yield the vinyl groups in protoporphyrinogen-IX.</text>
</comment>
<comment type="catalytic activity">
    <reaction evidence="1">
        <text>coproporphyrinogen III + O2 + 2 H(+) = protoporphyrinogen IX + 2 CO2 + 2 H2O</text>
        <dbReference type="Rhea" id="RHEA:18257"/>
        <dbReference type="ChEBI" id="CHEBI:15377"/>
        <dbReference type="ChEBI" id="CHEBI:15378"/>
        <dbReference type="ChEBI" id="CHEBI:15379"/>
        <dbReference type="ChEBI" id="CHEBI:16526"/>
        <dbReference type="ChEBI" id="CHEBI:57307"/>
        <dbReference type="ChEBI" id="CHEBI:57309"/>
        <dbReference type="EC" id="1.3.3.3"/>
    </reaction>
</comment>
<comment type="cofactor">
    <cofactor evidence="1">
        <name>a divalent metal cation</name>
        <dbReference type="ChEBI" id="CHEBI:60240"/>
    </cofactor>
</comment>
<comment type="pathway">
    <text evidence="1">Porphyrin-containing compound metabolism; protoporphyrin-IX biosynthesis; protoporphyrinogen-IX from coproporphyrinogen-III (O2 route): step 1/1.</text>
</comment>
<comment type="subunit">
    <text evidence="1">Homodimer.</text>
</comment>
<comment type="subcellular location">
    <subcellularLocation>
        <location evidence="1">Cytoplasm</location>
    </subcellularLocation>
</comment>
<comment type="similarity">
    <text evidence="1">Belongs to the aerobic coproporphyrinogen-III oxidase family.</text>
</comment>
<feature type="chain" id="PRO_1000019493" description="Oxygen-dependent coproporphyrinogen-III oxidase">
    <location>
        <begin position="1"/>
        <end position="279"/>
    </location>
</feature>
<feature type="region of interest" description="Important for dimerization" evidence="1">
    <location>
        <begin position="244"/>
        <end position="279"/>
    </location>
</feature>
<feature type="active site" description="Proton donor" evidence="1">
    <location>
        <position position="116"/>
    </location>
</feature>
<feature type="binding site" evidence="1">
    <location>
        <position position="102"/>
    </location>
    <ligand>
        <name>substrate</name>
    </ligand>
</feature>
<feature type="binding site" evidence="1">
    <location>
        <position position="106"/>
    </location>
    <ligand>
        <name>a divalent metal cation</name>
        <dbReference type="ChEBI" id="CHEBI:60240"/>
    </ligand>
</feature>
<feature type="binding site" evidence="1">
    <location>
        <position position="116"/>
    </location>
    <ligand>
        <name>a divalent metal cation</name>
        <dbReference type="ChEBI" id="CHEBI:60240"/>
    </ligand>
</feature>
<feature type="binding site" evidence="1">
    <location>
        <begin position="118"/>
        <end position="120"/>
    </location>
    <ligand>
        <name>substrate</name>
    </ligand>
</feature>
<feature type="binding site" evidence="1">
    <location>
        <position position="149"/>
    </location>
    <ligand>
        <name>a divalent metal cation</name>
        <dbReference type="ChEBI" id="CHEBI:60240"/>
    </ligand>
</feature>
<feature type="binding site" evidence="1">
    <location>
        <position position="179"/>
    </location>
    <ligand>
        <name>a divalent metal cation</name>
        <dbReference type="ChEBI" id="CHEBI:60240"/>
    </ligand>
</feature>
<feature type="site" description="Important for dimerization" evidence="1">
    <location>
        <position position="179"/>
    </location>
</feature>
<evidence type="ECO:0000255" key="1">
    <source>
        <dbReference type="HAMAP-Rule" id="MF_00333"/>
    </source>
</evidence>
<accession>A8GY81</accession>
<name>HEM6_RICB8</name>
<keyword id="KW-0963">Cytoplasm</keyword>
<keyword id="KW-0350">Heme biosynthesis</keyword>
<keyword id="KW-0479">Metal-binding</keyword>
<keyword id="KW-0560">Oxidoreductase</keyword>
<keyword id="KW-0627">Porphyrin biosynthesis</keyword>
<organism>
    <name type="scientific">Rickettsia bellii (strain OSU 85-389)</name>
    <dbReference type="NCBI Taxonomy" id="391896"/>
    <lineage>
        <taxon>Bacteria</taxon>
        <taxon>Pseudomonadati</taxon>
        <taxon>Pseudomonadota</taxon>
        <taxon>Alphaproteobacteria</taxon>
        <taxon>Rickettsiales</taxon>
        <taxon>Rickettsiaceae</taxon>
        <taxon>Rickettsieae</taxon>
        <taxon>Rickettsia</taxon>
        <taxon>belli group</taxon>
    </lineage>
</organism>